<comment type="function">
    <text evidence="1">Aspartyl-tRNA synthetase with relaxed tRNA specificity since it is able to aspartylate not only its cognate tRNA(Asp) but also tRNA(Asn). Reaction proceeds in two steps: L-aspartate is first activated by ATP to form Asp-AMP and then transferred to the acceptor end of tRNA(Asp/Asn).</text>
</comment>
<comment type="catalytic activity">
    <reaction evidence="1">
        <text>tRNA(Asx) + L-aspartate + ATP = L-aspartyl-tRNA(Asx) + AMP + diphosphate</text>
        <dbReference type="Rhea" id="RHEA:18349"/>
        <dbReference type="Rhea" id="RHEA-COMP:9710"/>
        <dbReference type="Rhea" id="RHEA-COMP:9711"/>
        <dbReference type="ChEBI" id="CHEBI:29991"/>
        <dbReference type="ChEBI" id="CHEBI:30616"/>
        <dbReference type="ChEBI" id="CHEBI:33019"/>
        <dbReference type="ChEBI" id="CHEBI:78442"/>
        <dbReference type="ChEBI" id="CHEBI:78516"/>
        <dbReference type="ChEBI" id="CHEBI:456215"/>
        <dbReference type="EC" id="6.1.1.23"/>
    </reaction>
</comment>
<comment type="subunit">
    <text evidence="1">Homodimer.</text>
</comment>
<comment type="subcellular location">
    <subcellularLocation>
        <location evidence="1">Cytoplasm</location>
    </subcellularLocation>
</comment>
<comment type="similarity">
    <text evidence="1">Belongs to the class-II aminoacyl-tRNA synthetase family. Type 1 subfamily.</text>
</comment>
<proteinExistence type="inferred from homology"/>
<dbReference type="EC" id="6.1.1.23" evidence="1"/>
<dbReference type="EMBL" id="AM747720">
    <property type="protein sequence ID" value="CAR51186.1"/>
    <property type="molecule type" value="Genomic_DNA"/>
</dbReference>
<dbReference type="RefSeq" id="WP_006485737.1">
    <property type="nucleotide sequence ID" value="NC_011000.1"/>
</dbReference>
<dbReference type="SMR" id="B4EBD1"/>
<dbReference type="GeneID" id="56559306"/>
<dbReference type="KEGG" id="bcj:BCAL0880"/>
<dbReference type="eggNOG" id="COG0173">
    <property type="taxonomic scope" value="Bacteria"/>
</dbReference>
<dbReference type="HOGENOM" id="CLU_014330_3_2_4"/>
<dbReference type="BioCyc" id="BCEN216591:G1G1V-976-MONOMER"/>
<dbReference type="Proteomes" id="UP000001035">
    <property type="component" value="Chromosome 1"/>
</dbReference>
<dbReference type="GO" id="GO:0005737">
    <property type="term" value="C:cytoplasm"/>
    <property type="evidence" value="ECO:0007669"/>
    <property type="project" value="UniProtKB-SubCell"/>
</dbReference>
<dbReference type="GO" id="GO:0004815">
    <property type="term" value="F:aspartate-tRNA ligase activity"/>
    <property type="evidence" value="ECO:0007669"/>
    <property type="project" value="UniProtKB-UniRule"/>
</dbReference>
<dbReference type="GO" id="GO:0050560">
    <property type="term" value="F:aspartate-tRNA(Asn) ligase activity"/>
    <property type="evidence" value="ECO:0007669"/>
    <property type="project" value="UniProtKB-EC"/>
</dbReference>
<dbReference type="GO" id="GO:0005524">
    <property type="term" value="F:ATP binding"/>
    <property type="evidence" value="ECO:0007669"/>
    <property type="project" value="UniProtKB-UniRule"/>
</dbReference>
<dbReference type="GO" id="GO:0003676">
    <property type="term" value="F:nucleic acid binding"/>
    <property type="evidence" value="ECO:0007669"/>
    <property type="project" value="InterPro"/>
</dbReference>
<dbReference type="GO" id="GO:0006422">
    <property type="term" value="P:aspartyl-tRNA aminoacylation"/>
    <property type="evidence" value="ECO:0007669"/>
    <property type="project" value="UniProtKB-UniRule"/>
</dbReference>
<dbReference type="CDD" id="cd00777">
    <property type="entry name" value="AspRS_core"/>
    <property type="match status" value="1"/>
</dbReference>
<dbReference type="CDD" id="cd04317">
    <property type="entry name" value="EcAspRS_like_N"/>
    <property type="match status" value="1"/>
</dbReference>
<dbReference type="Gene3D" id="3.30.930.10">
    <property type="entry name" value="Bira Bifunctional Protein, Domain 2"/>
    <property type="match status" value="1"/>
</dbReference>
<dbReference type="Gene3D" id="3.30.1360.30">
    <property type="entry name" value="GAD-like domain"/>
    <property type="match status" value="1"/>
</dbReference>
<dbReference type="Gene3D" id="2.40.50.140">
    <property type="entry name" value="Nucleic acid-binding proteins"/>
    <property type="match status" value="1"/>
</dbReference>
<dbReference type="HAMAP" id="MF_00044">
    <property type="entry name" value="Asp_tRNA_synth_type1"/>
    <property type="match status" value="1"/>
</dbReference>
<dbReference type="InterPro" id="IPR004364">
    <property type="entry name" value="Aa-tRNA-synt_II"/>
</dbReference>
<dbReference type="InterPro" id="IPR006195">
    <property type="entry name" value="aa-tRNA-synth_II"/>
</dbReference>
<dbReference type="InterPro" id="IPR045864">
    <property type="entry name" value="aa-tRNA-synth_II/BPL/LPL"/>
</dbReference>
<dbReference type="InterPro" id="IPR004524">
    <property type="entry name" value="Asp-tRNA-ligase_1"/>
</dbReference>
<dbReference type="InterPro" id="IPR047089">
    <property type="entry name" value="Asp-tRNA-ligase_1_N"/>
</dbReference>
<dbReference type="InterPro" id="IPR002312">
    <property type="entry name" value="Asp/Asn-tRNA-synth_IIb"/>
</dbReference>
<dbReference type="InterPro" id="IPR047090">
    <property type="entry name" value="AspRS_core"/>
</dbReference>
<dbReference type="InterPro" id="IPR004115">
    <property type="entry name" value="GAD-like_sf"/>
</dbReference>
<dbReference type="InterPro" id="IPR029351">
    <property type="entry name" value="GAD_dom"/>
</dbReference>
<dbReference type="InterPro" id="IPR012340">
    <property type="entry name" value="NA-bd_OB-fold"/>
</dbReference>
<dbReference type="InterPro" id="IPR004365">
    <property type="entry name" value="NA-bd_OB_tRNA"/>
</dbReference>
<dbReference type="NCBIfam" id="TIGR00459">
    <property type="entry name" value="aspS_bact"/>
    <property type="match status" value="1"/>
</dbReference>
<dbReference type="NCBIfam" id="NF001750">
    <property type="entry name" value="PRK00476.1"/>
    <property type="match status" value="1"/>
</dbReference>
<dbReference type="PANTHER" id="PTHR22594:SF5">
    <property type="entry name" value="ASPARTATE--TRNA LIGASE, MITOCHONDRIAL"/>
    <property type="match status" value="1"/>
</dbReference>
<dbReference type="PANTHER" id="PTHR22594">
    <property type="entry name" value="ASPARTYL/LYSYL-TRNA SYNTHETASE"/>
    <property type="match status" value="1"/>
</dbReference>
<dbReference type="Pfam" id="PF02938">
    <property type="entry name" value="GAD"/>
    <property type="match status" value="1"/>
</dbReference>
<dbReference type="Pfam" id="PF00152">
    <property type="entry name" value="tRNA-synt_2"/>
    <property type="match status" value="1"/>
</dbReference>
<dbReference type="Pfam" id="PF01336">
    <property type="entry name" value="tRNA_anti-codon"/>
    <property type="match status" value="1"/>
</dbReference>
<dbReference type="PRINTS" id="PR01042">
    <property type="entry name" value="TRNASYNTHASP"/>
</dbReference>
<dbReference type="SUPFAM" id="SSF55681">
    <property type="entry name" value="Class II aaRS and biotin synthetases"/>
    <property type="match status" value="1"/>
</dbReference>
<dbReference type="SUPFAM" id="SSF55261">
    <property type="entry name" value="GAD domain-like"/>
    <property type="match status" value="1"/>
</dbReference>
<dbReference type="SUPFAM" id="SSF50249">
    <property type="entry name" value="Nucleic acid-binding proteins"/>
    <property type="match status" value="1"/>
</dbReference>
<dbReference type="PROSITE" id="PS50862">
    <property type="entry name" value="AA_TRNA_LIGASE_II"/>
    <property type="match status" value="1"/>
</dbReference>
<accession>B4EBD1</accession>
<evidence type="ECO:0000255" key="1">
    <source>
        <dbReference type="HAMAP-Rule" id="MF_00044"/>
    </source>
</evidence>
<protein>
    <recommendedName>
        <fullName evidence="1">Aspartate--tRNA(Asp/Asn) ligase</fullName>
        <ecNumber evidence="1">6.1.1.23</ecNumber>
    </recommendedName>
    <alternativeName>
        <fullName evidence="1">Aspartyl-tRNA synthetase</fullName>
        <shortName evidence="1">AspRS</shortName>
    </alternativeName>
    <alternativeName>
        <fullName evidence="1">Non-discriminating aspartyl-tRNA synthetase</fullName>
        <shortName evidence="1">ND-AspRS</shortName>
    </alternativeName>
</protein>
<reference key="1">
    <citation type="journal article" date="2009" name="J. Bacteriol.">
        <title>The genome of Burkholderia cenocepacia J2315, an epidemic pathogen of cystic fibrosis patients.</title>
        <authorList>
            <person name="Holden M.T."/>
            <person name="Seth-Smith H.M."/>
            <person name="Crossman L.C."/>
            <person name="Sebaihia M."/>
            <person name="Bentley S.D."/>
            <person name="Cerdeno-Tarraga A.M."/>
            <person name="Thomson N.R."/>
            <person name="Bason N."/>
            <person name="Quail M.A."/>
            <person name="Sharp S."/>
            <person name="Cherevach I."/>
            <person name="Churcher C."/>
            <person name="Goodhead I."/>
            <person name="Hauser H."/>
            <person name="Holroyd N."/>
            <person name="Mungall K."/>
            <person name="Scott P."/>
            <person name="Walker D."/>
            <person name="White B."/>
            <person name="Rose H."/>
            <person name="Iversen P."/>
            <person name="Mil-Homens D."/>
            <person name="Rocha E.P."/>
            <person name="Fialho A.M."/>
            <person name="Baldwin A."/>
            <person name="Dowson C."/>
            <person name="Barrell B.G."/>
            <person name="Govan J.R."/>
            <person name="Vandamme P."/>
            <person name="Hart C.A."/>
            <person name="Mahenthiralingam E."/>
            <person name="Parkhill J."/>
        </authorList>
    </citation>
    <scope>NUCLEOTIDE SEQUENCE [LARGE SCALE GENOMIC DNA]</scope>
    <source>
        <strain>ATCC BAA-245 / DSM 16553 / LMG 16656 / NCTC 13227 / J2315 / CF5610</strain>
    </source>
</reference>
<name>SYDND_BURCJ</name>
<keyword id="KW-0030">Aminoacyl-tRNA synthetase</keyword>
<keyword id="KW-0067">ATP-binding</keyword>
<keyword id="KW-0963">Cytoplasm</keyword>
<keyword id="KW-0436">Ligase</keyword>
<keyword id="KW-0547">Nucleotide-binding</keyword>
<keyword id="KW-0648">Protein biosynthesis</keyword>
<organism>
    <name type="scientific">Burkholderia cenocepacia (strain ATCC BAA-245 / DSM 16553 / LMG 16656 / NCTC 13227 / J2315 / CF5610)</name>
    <name type="common">Burkholderia cepacia (strain J2315)</name>
    <dbReference type="NCBI Taxonomy" id="216591"/>
    <lineage>
        <taxon>Bacteria</taxon>
        <taxon>Pseudomonadati</taxon>
        <taxon>Pseudomonadota</taxon>
        <taxon>Betaproteobacteria</taxon>
        <taxon>Burkholderiales</taxon>
        <taxon>Burkholderiaceae</taxon>
        <taxon>Burkholderia</taxon>
        <taxon>Burkholderia cepacia complex</taxon>
    </lineage>
</organism>
<feature type="chain" id="PRO_1000090969" description="Aspartate--tRNA(Asp/Asn) ligase">
    <location>
        <begin position="1"/>
        <end position="600"/>
    </location>
</feature>
<feature type="region of interest" description="Aspartate" evidence="1">
    <location>
        <begin position="198"/>
        <end position="201"/>
    </location>
</feature>
<feature type="binding site" evidence="1">
    <location>
        <position position="174"/>
    </location>
    <ligand>
        <name>L-aspartate</name>
        <dbReference type="ChEBI" id="CHEBI:29991"/>
    </ligand>
</feature>
<feature type="binding site" evidence="1">
    <location>
        <begin position="220"/>
        <end position="222"/>
    </location>
    <ligand>
        <name>ATP</name>
        <dbReference type="ChEBI" id="CHEBI:30616"/>
    </ligand>
</feature>
<feature type="binding site" evidence="1">
    <location>
        <position position="220"/>
    </location>
    <ligand>
        <name>L-aspartate</name>
        <dbReference type="ChEBI" id="CHEBI:29991"/>
    </ligand>
</feature>
<feature type="binding site" evidence="1">
    <location>
        <position position="229"/>
    </location>
    <ligand>
        <name>ATP</name>
        <dbReference type="ChEBI" id="CHEBI:30616"/>
    </ligand>
</feature>
<feature type="binding site" evidence="1">
    <location>
        <position position="457"/>
    </location>
    <ligand>
        <name>L-aspartate</name>
        <dbReference type="ChEBI" id="CHEBI:29991"/>
    </ligand>
</feature>
<feature type="binding site" evidence="1">
    <location>
        <position position="491"/>
    </location>
    <ligand>
        <name>ATP</name>
        <dbReference type="ChEBI" id="CHEBI:30616"/>
    </ligand>
</feature>
<feature type="binding site" evidence="1">
    <location>
        <position position="498"/>
    </location>
    <ligand>
        <name>L-aspartate</name>
        <dbReference type="ChEBI" id="CHEBI:29991"/>
    </ligand>
</feature>
<feature type="binding site" evidence="1">
    <location>
        <begin position="543"/>
        <end position="546"/>
    </location>
    <ligand>
        <name>ATP</name>
        <dbReference type="ChEBI" id="CHEBI:30616"/>
    </ligand>
</feature>
<feature type="site" description="Important for tRNA non-discrimination" evidence="1">
    <location>
        <position position="32"/>
    </location>
</feature>
<feature type="site" description="Important for tRNA non-discrimination" evidence="1">
    <location>
        <position position="83"/>
    </location>
</feature>
<sequence length="600" mass="67701">MSMRTEYCGLVTEHLLGQTVSLCGWVQRRRDHGGVIFIDLRDREGLVQVVCDPDRAEMFATAEGVRNEFCVQIKGLVRNRPEGTVNAGLKSGKIEVLCHELNVLNASVTPPFQLDDDNLSETTRLTHRVLDLRRPQMQHNLRLRYRVAIEARKYLDEQGFIDIETPMLTKSTPEGARDYLVPSRVNAGQFFALPQSPQLFKQLLMVANFDRYYQITKCFRDEDLRADRQPEFTQIDCETSFLGEQEIRDLFEDMIRHIFKTTIDVELDAKFPVMPYSEAMARFGSDKPDLRVQLEFTELTDAMKDVDFKVFSTPANAKDGRVAALRVPKGGELSRGDIDGYTEFVRIYGAKGLAWIKVNEKAKGRDGLQSPIVKNLHDASIAAILERTGAEDGDIIFFAADRAKVVNDSLGALRLKIGHSEFGKANGLVQAGWKPLWVVDFPMFEYDDEDARYVAAHHPFTSPKDEHLEYLETDPGRCLAKAYDMVLNGWEIGGGSVRIHREEVQSKVFRALKIGAEEAQAKFGFLLDALQYGAPPHGGIAFGLDRIVTMMAGADSIRDVIAFPKTQRAQDLLTQAPSPVDERQLRELHIRLRQPEQPKA</sequence>
<gene>
    <name evidence="1" type="primary">aspS</name>
    <name type="ordered locus">BceJ2315_08700</name>
    <name type="ORF">BCAL0880</name>
</gene>